<keyword id="KW-0285">Flavoprotein</keyword>
<keyword id="KW-0288">FMN</keyword>
<keyword id="KW-0560">Oxidoreductase</keyword>
<keyword id="KW-0664">Pyridoxine biosynthesis</keyword>
<protein>
    <recommendedName>
        <fullName evidence="1">Pyridoxine/pyridoxamine 5'-phosphate oxidase</fullName>
        <ecNumber evidence="1">1.4.3.5</ecNumber>
    </recommendedName>
    <alternativeName>
        <fullName evidence="1">PNP/PMP oxidase</fullName>
        <shortName evidence="1">PNPOx</shortName>
    </alternativeName>
    <alternativeName>
        <fullName evidence="1">Pyridoxal 5'-phosphate synthase</fullName>
    </alternativeName>
</protein>
<evidence type="ECO:0000255" key="1">
    <source>
        <dbReference type="HAMAP-Rule" id="MF_01629"/>
    </source>
</evidence>
<gene>
    <name evidence="1" type="primary">pdxH</name>
    <name type="ordered locus">mll7454</name>
</gene>
<comment type="function">
    <text evidence="1">Catalyzes the oxidation of either pyridoxine 5'-phosphate (PNP) or pyridoxamine 5'-phosphate (PMP) into pyridoxal 5'-phosphate (PLP).</text>
</comment>
<comment type="catalytic activity">
    <reaction evidence="1">
        <text>pyridoxamine 5'-phosphate + O2 + H2O = pyridoxal 5'-phosphate + H2O2 + NH4(+)</text>
        <dbReference type="Rhea" id="RHEA:15817"/>
        <dbReference type="ChEBI" id="CHEBI:15377"/>
        <dbReference type="ChEBI" id="CHEBI:15379"/>
        <dbReference type="ChEBI" id="CHEBI:16240"/>
        <dbReference type="ChEBI" id="CHEBI:28938"/>
        <dbReference type="ChEBI" id="CHEBI:58451"/>
        <dbReference type="ChEBI" id="CHEBI:597326"/>
        <dbReference type="EC" id="1.4.3.5"/>
    </reaction>
</comment>
<comment type="catalytic activity">
    <reaction evidence="1">
        <text>pyridoxine 5'-phosphate + O2 = pyridoxal 5'-phosphate + H2O2</text>
        <dbReference type="Rhea" id="RHEA:15149"/>
        <dbReference type="ChEBI" id="CHEBI:15379"/>
        <dbReference type="ChEBI" id="CHEBI:16240"/>
        <dbReference type="ChEBI" id="CHEBI:58589"/>
        <dbReference type="ChEBI" id="CHEBI:597326"/>
        <dbReference type="EC" id="1.4.3.5"/>
    </reaction>
</comment>
<comment type="cofactor">
    <cofactor evidence="1">
        <name>FMN</name>
        <dbReference type="ChEBI" id="CHEBI:58210"/>
    </cofactor>
    <text evidence="1">Binds 1 FMN per subunit.</text>
</comment>
<comment type="pathway">
    <text evidence="1">Cofactor metabolism; pyridoxal 5'-phosphate salvage; pyridoxal 5'-phosphate from pyridoxamine 5'-phosphate: step 1/1.</text>
</comment>
<comment type="pathway">
    <text evidence="1">Cofactor metabolism; pyridoxal 5'-phosphate salvage; pyridoxal 5'-phosphate from pyridoxine 5'-phosphate: step 1/1.</text>
</comment>
<comment type="subunit">
    <text evidence="1">Homodimer.</text>
</comment>
<comment type="similarity">
    <text evidence="1">Belongs to the pyridoxamine 5'-phosphate oxidase family.</text>
</comment>
<name>PDXH_RHILO</name>
<proteinExistence type="inferred from homology"/>
<organism>
    <name type="scientific">Mesorhizobium japonicum (strain LMG 29417 / CECT 9101 / MAFF 303099)</name>
    <name type="common">Mesorhizobium loti (strain MAFF 303099)</name>
    <dbReference type="NCBI Taxonomy" id="266835"/>
    <lineage>
        <taxon>Bacteria</taxon>
        <taxon>Pseudomonadati</taxon>
        <taxon>Pseudomonadota</taxon>
        <taxon>Alphaproteobacteria</taxon>
        <taxon>Hyphomicrobiales</taxon>
        <taxon>Phyllobacteriaceae</taxon>
        <taxon>Mesorhizobium</taxon>
    </lineage>
</organism>
<feature type="chain" id="PRO_0000167746" description="Pyridoxine/pyridoxamine 5'-phosphate oxidase">
    <location>
        <begin position="1"/>
        <end position="205"/>
    </location>
</feature>
<feature type="binding site" evidence="1">
    <location>
        <begin position="53"/>
        <end position="58"/>
    </location>
    <ligand>
        <name>FMN</name>
        <dbReference type="ChEBI" id="CHEBI:58210"/>
    </ligand>
</feature>
<feature type="binding site" evidence="1">
    <location>
        <position position="58"/>
    </location>
    <ligand>
        <name>substrate</name>
    </ligand>
</feature>
<feature type="binding site" evidence="1">
    <location>
        <begin position="68"/>
        <end position="69"/>
    </location>
    <ligand>
        <name>FMN</name>
        <dbReference type="ChEBI" id="CHEBI:58210"/>
    </ligand>
</feature>
<feature type="binding site" evidence="1">
    <location>
        <position position="75"/>
    </location>
    <ligand>
        <name>FMN</name>
        <dbReference type="ChEBI" id="CHEBI:58210"/>
    </ligand>
</feature>
<feature type="binding site" evidence="1">
    <location>
        <position position="97"/>
    </location>
    <ligand>
        <name>FMN</name>
        <dbReference type="ChEBI" id="CHEBI:58210"/>
    </ligand>
</feature>
<feature type="binding site" evidence="1">
    <location>
        <position position="115"/>
    </location>
    <ligand>
        <name>substrate</name>
    </ligand>
</feature>
<feature type="binding site" evidence="1">
    <location>
        <position position="119"/>
    </location>
    <ligand>
        <name>substrate</name>
    </ligand>
</feature>
<feature type="binding site" evidence="1">
    <location>
        <position position="123"/>
    </location>
    <ligand>
        <name>substrate</name>
    </ligand>
</feature>
<feature type="binding site" evidence="1">
    <location>
        <begin position="132"/>
        <end position="133"/>
    </location>
    <ligand>
        <name>FMN</name>
        <dbReference type="ChEBI" id="CHEBI:58210"/>
    </ligand>
</feature>
<feature type="binding site" evidence="1">
    <location>
        <position position="177"/>
    </location>
    <ligand>
        <name>FMN</name>
        <dbReference type="ChEBI" id="CHEBI:58210"/>
    </ligand>
</feature>
<feature type="binding site" evidence="1">
    <location>
        <begin position="183"/>
        <end position="185"/>
    </location>
    <ligand>
        <name>substrate</name>
    </ligand>
</feature>
<feature type="binding site" evidence="1">
    <location>
        <position position="187"/>
    </location>
    <ligand>
        <name>FMN</name>
        <dbReference type="ChEBI" id="CHEBI:58210"/>
    </ligand>
</feature>
<reference key="1">
    <citation type="journal article" date="2000" name="DNA Res.">
        <title>Complete genome structure of the nitrogen-fixing symbiotic bacterium Mesorhizobium loti.</title>
        <authorList>
            <person name="Kaneko T."/>
            <person name="Nakamura Y."/>
            <person name="Sato S."/>
            <person name="Asamizu E."/>
            <person name="Kato T."/>
            <person name="Sasamoto S."/>
            <person name="Watanabe A."/>
            <person name="Idesawa K."/>
            <person name="Ishikawa A."/>
            <person name="Kawashima K."/>
            <person name="Kimura T."/>
            <person name="Kishida Y."/>
            <person name="Kiyokawa C."/>
            <person name="Kohara M."/>
            <person name="Matsumoto M."/>
            <person name="Matsuno A."/>
            <person name="Mochizuki Y."/>
            <person name="Nakayama S."/>
            <person name="Nakazaki N."/>
            <person name="Shimpo S."/>
            <person name="Sugimoto M."/>
            <person name="Takeuchi C."/>
            <person name="Yamada M."/>
            <person name="Tabata S."/>
        </authorList>
    </citation>
    <scope>NUCLEOTIDE SEQUENCE [LARGE SCALE GENOMIC DNA]</scope>
    <source>
        <strain>LMG 29417 / CECT 9101 / MAFF 303099</strain>
    </source>
</reference>
<accession>Q986A0</accession>
<sequence>MSDTELTTSDFTEAAEPFRLFAAWLDDATKSEINDANGVALATVDAEGMPDVRMVLLKGFDEGGFVFYTNFESAKGQEILGSMKAAMCFHWKSLRRQVRIRGPVEIVSDAEADAYYATRPRGSRIGAWASKQSRPLESRFALEKAVAEYTARYAIGEIPRPKHWSGFRIVPKTIEFWHDRPFRLHDRVVFSRNAKGDWDKARLYP</sequence>
<dbReference type="EC" id="1.4.3.5" evidence="1"/>
<dbReference type="EMBL" id="BA000012">
    <property type="protein sequence ID" value="BAB53553.1"/>
    <property type="molecule type" value="Genomic_DNA"/>
</dbReference>
<dbReference type="RefSeq" id="WP_010914860.1">
    <property type="nucleotide sequence ID" value="NC_002678.2"/>
</dbReference>
<dbReference type="SMR" id="Q986A0"/>
<dbReference type="GeneID" id="66685266"/>
<dbReference type="KEGG" id="mlo:mll7454"/>
<dbReference type="eggNOG" id="COG0259">
    <property type="taxonomic scope" value="Bacteria"/>
</dbReference>
<dbReference type="HOGENOM" id="CLU_032263_2_2_5"/>
<dbReference type="UniPathway" id="UPA01068">
    <property type="reaction ID" value="UER00304"/>
</dbReference>
<dbReference type="UniPathway" id="UPA01068">
    <property type="reaction ID" value="UER00305"/>
</dbReference>
<dbReference type="Proteomes" id="UP000000552">
    <property type="component" value="Chromosome"/>
</dbReference>
<dbReference type="GO" id="GO:0010181">
    <property type="term" value="F:FMN binding"/>
    <property type="evidence" value="ECO:0007669"/>
    <property type="project" value="UniProtKB-UniRule"/>
</dbReference>
<dbReference type="GO" id="GO:0004733">
    <property type="term" value="F:pyridoxamine phosphate oxidase activity"/>
    <property type="evidence" value="ECO:0007669"/>
    <property type="project" value="UniProtKB-UniRule"/>
</dbReference>
<dbReference type="GO" id="GO:0008615">
    <property type="term" value="P:pyridoxine biosynthetic process"/>
    <property type="evidence" value="ECO:0007669"/>
    <property type="project" value="UniProtKB-KW"/>
</dbReference>
<dbReference type="Gene3D" id="2.30.110.10">
    <property type="entry name" value="Electron Transport, Fmn-binding Protein, Chain A"/>
    <property type="match status" value="1"/>
</dbReference>
<dbReference type="HAMAP" id="MF_01629">
    <property type="entry name" value="PdxH"/>
    <property type="match status" value="1"/>
</dbReference>
<dbReference type="InterPro" id="IPR000659">
    <property type="entry name" value="Pyridox_Oxase"/>
</dbReference>
<dbReference type="InterPro" id="IPR019740">
    <property type="entry name" value="Pyridox_Oxase_CS"/>
</dbReference>
<dbReference type="InterPro" id="IPR011576">
    <property type="entry name" value="Pyridox_Oxase_N"/>
</dbReference>
<dbReference type="InterPro" id="IPR019576">
    <property type="entry name" value="Pyridoxamine_oxidase_dimer_C"/>
</dbReference>
<dbReference type="InterPro" id="IPR012349">
    <property type="entry name" value="Split_barrel_FMN-bd"/>
</dbReference>
<dbReference type="NCBIfam" id="TIGR00558">
    <property type="entry name" value="pdxH"/>
    <property type="match status" value="1"/>
</dbReference>
<dbReference type="NCBIfam" id="NF004231">
    <property type="entry name" value="PRK05679.1"/>
    <property type="match status" value="1"/>
</dbReference>
<dbReference type="PANTHER" id="PTHR10851:SF0">
    <property type="entry name" value="PYRIDOXINE-5'-PHOSPHATE OXIDASE"/>
    <property type="match status" value="1"/>
</dbReference>
<dbReference type="PANTHER" id="PTHR10851">
    <property type="entry name" value="PYRIDOXINE-5-PHOSPHATE OXIDASE"/>
    <property type="match status" value="1"/>
</dbReference>
<dbReference type="Pfam" id="PF10590">
    <property type="entry name" value="PNP_phzG_C"/>
    <property type="match status" value="1"/>
</dbReference>
<dbReference type="Pfam" id="PF01243">
    <property type="entry name" value="PNPOx_N"/>
    <property type="match status" value="1"/>
</dbReference>
<dbReference type="PIRSF" id="PIRSF000190">
    <property type="entry name" value="Pyd_amn-ph_oxd"/>
    <property type="match status" value="1"/>
</dbReference>
<dbReference type="SUPFAM" id="SSF50475">
    <property type="entry name" value="FMN-binding split barrel"/>
    <property type="match status" value="1"/>
</dbReference>
<dbReference type="PROSITE" id="PS01064">
    <property type="entry name" value="PYRIDOX_OXIDASE"/>
    <property type="match status" value="1"/>
</dbReference>